<dbReference type="EC" id="3.5.4.16" evidence="1"/>
<dbReference type="EMBL" id="CP000872">
    <property type="protein sequence ID" value="ABX62141.1"/>
    <property type="molecule type" value="Genomic_DNA"/>
</dbReference>
<dbReference type="RefSeq" id="WP_004690854.1">
    <property type="nucleotide sequence ID" value="NC_010103.1"/>
</dbReference>
<dbReference type="SMR" id="A9M586"/>
<dbReference type="GeneID" id="55590763"/>
<dbReference type="KEGG" id="bcs:BCAN_A1090"/>
<dbReference type="HOGENOM" id="CLU_049768_3_1_5"/>
<dbReference type="PhylomeDB" id="A9M586"/>
<dbReference type="UniPathway" id="UPA00848">
    <property type="reaction ID" value="UER00151"/>
</dbReference>
<dbReference type="Proteomes" id="UP000001385">
    <property type="component" value="Chromosome I"/>
</dbReference>
<dbReference type="GO" id="GO:0005737">
    <property type="term" value="C:cytoplasm"/>
    <property type="evidence" value="ECO:0007669"/>
    <property type="project" value="TreeGrafter"/>
</dbReference>
<dbReference type="GO" id="GO:0005525">
    <property type="term" value="F:GTP binding"/>
    <property type="evidence" value="ECO:0007669"/>
    <property type="project" value="UniProtKB-KW"/>
</dbReference>
<dbReference type="GO" id="GO:0003934">
    <property type="term" value="F:GTP cyclohydrolase I activity"/>
    <property type="evidence" value="ECO:0007669"/>
    <property type="project" value="UniProtKB-UniRule"/>
</dbReference>
<dbReference type="GO" id="GO:0008270">
    <property type="term" value="F:zinc ion binding"/>
    <property type="evidence" value="ECO:0007669"/>
    <property type="project" value="UniProtKB-UniRule"/>
</dbReference>
<dbReference type="GO" id="GO:0006730">
    <property type="term" value="P:one-carbon metabolic process"/>
    <property type="evidence" value="ECO:0007669"/>
    <property type="project" value="UniProtKB-UniRule"/>
</dbReference>
<dbReference type="GO" id="GO:0006729">
    <property type="term" value="P:tetrahydrobiopterin biosynthetic process"/>
    <property type="evidence" value="ECO:0007669"/>
    <property type="project" value="TreeGrafter"/>
</dbReference>
<dbReference type="GO" id="GO:0046654">
    <property type="term" value="P:tetrahydrofolate biosynthetic process"/>
    <property type="evidence" value="ECO:0007669"/>
    <property type="project" value="UniProtKB-UniRule"/>
</dbReference>
<dbReference type="FunFam" id="1.10.286.10:FF:000001">
    <property type="entry name" value="GTP cyclohydrolase 1"/>
    <property type="match status" value="1"/>
</dbReference>
<dbReference type="FunFam" id="3.30.1130.10:FF:000001">
    <property type="entry name" value="GTP cyclohydrolase 1"/>
    <property type="match status" value="1"/>
</dbReference>
<dbReference type="Gene3D" id="1.10.286.10">
    <property type="match status" value="1"/>
</dbReference>
<dbReference type="Gene3D" id="3.30.1130.10">
    <property type="match status" value="1"/>
</dbReference>
<dbReference type="HAMAP" id="MF_00223">
    <property type="entry name" value="FolE"/>
    <property type="match status" value="1"/>
</dbReference>
<dbReference type="InterPro" id="IPR043133">
    <property type="entry name" value="GTP-CH-I_C/QueF"/>
</dbReference>
<dbReference type="InterPro" id="IPR043134">
    <property type="entry name" value="GTP-CH-I_N"/>
</dbReference>
<dbReference type="InterPro" id="IPR001474">
    <property type="entry name" value="GTP_CycHdrlase_I"/>
</dbReference>
<dbReference type="InterPro" id="IPR018234">
    <property type="entry name" value="GTP_CycHdrlase_I_CS"/>
</dbReference>
<dbReference type="InterPro" id="IPR020602">
    <property type="entry name" value="GTP_CycHdrlase_I_dom"/>
</dbReference>
<dbReference type="NCBIfam" id="TIGR00063">
    <property type="entry name" value="folE"/>
    <property type="match status" value="1"/>
</dbReference>
<dbReference type="NCBIfam" id="NF006825">
    <property type="entry name" value="PRK09347.1-2"/>
    <property type="match status" value="1"/>
</dbReference>
<dbReference type="NCBIfam" id="NF006826">
    <property type="entry name" value="PRK09347.1-3"/>
    <property type="match status" value="1"/>
</dbReference>
<dbReference type="PANTHER" id="PTHR11109:SF7">
    <property type="entry name" value="GTP CYCLOHYDROLASE 1"/>
    <property type="match status" value="1"/>
</dbReference>
<dbReference type="PANTHER" id="PTHR11109">
    <property type="entry name" value="GTP CYCLOHYDROLASE I"/>
    <property type="match status" value="1"/>
</dbReference>
<dbReference type="Pfam" id="PF01227">
    <property type="entry name" value="GTP_cyclohydroI"/>
    <property type="match status" value="1"/>
</dbReference>
<dbReference type="SUPFAM" id="SSF55620">
    <property type="entry name" value="Tetrahydrobiopterin biosynthesis enzymes-like"/>
    <property type="match status" value="1"/>
</dbReference>
<dbReference type="PROSITE" id="PS00859">
    <property type="entry name" value="GTP_CYCLOHYDROL_1_1"/>
    <property type="match status" value="1"/>
</dbReference>
<feature type="chain" id="PRO_1000078135" description="GTP cyclohydrolase 1">
    <location>
        <begin position="1"/>
        <end position="213"/>
    </location>
</feature>
<feature type="binding site" evidence="1">
    <location>
        <position position="104"/>
    </location>
    <ligand>
        <name>Zn(2+)</name>
        <dbReference type="ChEBI" id="CHEBI:29105"/>
    </ligand>
</feature>
<feature type="binding site" evidence="1">
    <location>
        <position position="107"/>
    </location>
    <ligand>
        <name>Zn(2+)</name>
        <dbReference type="ChEBI" id="CHEBI:29105"/>
    </ligand>
</feature>
<feature type="binding site" evidence="1">
    <location>
        <position position="175"/>
    </location>
    <ligand>
        <name>Zn(2+)</name>
        <dbReference type="ChEBI" id="CHEBI:29105"/>
    </ligand>
</feature>
<accession>A9M586</accession>
<keyword id="KW-0342">GTP-binding</keyword>
<keyword id="KW-0378">Hydrolase</keyword>
<keyword id="KW-0479">Metal-binding</keyword>
<keyword id="KW-0547">Nucleotide-binding</keyword>
<keyword id="KW-0554">One-carbon metabolism</keyword>
<keyword id="KW-1185">Reference proteome</keyword>
<keyword id="KW-0862">Zinc</keyword>
<reference key="1">
    <citation type="submission" date="2007-10" db="EMBL/GenBank/DDBJ databases">
        <title>Brucella canis ATCC 23365 whole genome shotgun sequencing project.</title>
        <authorList>
            <person name="Setubal J.C."/>
            <person name="Bowns C."/>
            <person name="Boyle S."/>
            <person name="Crasta O.R."/>
            <person name="Czar M.J."/>
            <person name="Dharmanolla C."/>
            <person name="Gillespie J.J."/>
            <person name="Kenyon R.W."/>
            <person name="Lu J."/>
            <person name="Mane S."/>
            <person name="Mohapatra S."/>
            <person name="Nagrani S."/>
            <person name="Purkayastha A."/>
            <person name="Rajasimha H.K."/>
            <person name="Shallom J.M."/>
            <person name="Shallom S."/>
            <person name="Shukla M."/>
            <person name="Snyder E.E."/>
            <person name="Sobral B.W."/>
            <person name="Wattam A.R."/>
            <person name="Will R."/>
            <person name="Williams K."/>
            <person name="Yoo H."/>
            <person name="Bruce D."/>
            <person name="Detter C."/>
            <person name="Munk C."/>
            <person name="Brettin T.S."/>
        </authorList>
    </citation>
    <scope>NUCLEOTIDE SEQUENCE [LARGE SCALE GENOMIC DNA]</scope>
    <source>
        <strain>ATCC 23365 / NCTC 10854 / RM-666</strain>
    </source>
</reference>
<evidence type="ECO:0000255" key="1">
    <source>
        <dbReference type="HAMAP-Rule" id="MF_00223"/>
    </source>
</evidence>
<name>GCH1_BRUC2</name>
<comment type="catalytic activity">
    <reaction evidence="1">
        <text>GTP + H2O = 7,8-dihydroneopterin 3'-triphosphate + formate + H(+)</text>
        <dbReference type="Rhea" id="RHEA:17473"/>
        <dbReference type="ChEBI" id="CHEBI:15377"/>
        <dbReference type="ChEBI" id="CHEBI:15378"/>
        <dbReference type="ChEBI" id="CHEBI:15740"/>
        <dbReference type="ChEBI" id="CHEBI:37565"/>
        <dbReference type="ChEBI" id="CHEBI:58462"/>
        <dbReference type="EC" id="3.5.4.16"/>
    </reaction>
</comment>
<comment type="pathway">
    <text evidence="1">Cofactor biosynthesis; 7,8-dihydroneopterin triphosphate biosynthesis; 7,8-dihydroneopterin triphosphate from GTP: step 1/1.</text>
</comment>
<comment type="subunit">
    <text evidence="1">Homomer.</text>
</comment>
<comment type="similarity">
    <text evidence="1">Belongs to the GTP cyclohydrolase I family.</text>
</comment>
<organism>
    <name type="scientific">Brucella canis (strain ATCC 23365 / NCTC 10854 / RM-666)</name>
    <dbReference type="NCBI Taxonomy" id="483179"/>
    <lineage>
        <taxon>Bacteria</taxon>
        <taxon>Pseudomonadati</taxon>
        <taxon>Pseudomonadota</taxon>
        <taxon>Alphaproteobacteria</taxon>
        <taxon>Hyphomicrobiales</taxon>
        <taxon>Brucellaceae</taxon>
        <taxon>Brucella/Ochrobactrum group</taxon>
        <taxon>Brucella</taxon>
    </lineage>
</organism>
<protein>
    <recommendedName>
        <fullName evidence="1">GTP cyclohydrolase 1</fullName>
        <ecNumber evidence="1">3.5.4.16</ecNumber>
    </recommendedName>
    <alternativeName>
        <fullName evidence="1">GTP cyclohydrolase I</fullName>
        <shortName evidence="1">GTP-CH-I</shortName>
    </alternativeName>
</protein>
<sequence>MDARILQDNDDTSLPVNQASVTRIHKKPGKAEAEAAVRTLLLWAGEDPDREGLLETPKRVAKAYQELFGGYSESPEEVLGTTFEEVAGYDDMVLVKDISFFSHCEHHMVPIIGKAHVAYLPEGRVVGLSKIARVVDIFARRLQTQESITAQIADSMQRILKPRGVAVMIEAEHMCMAMRSIRKQGSSTITTTFTGDFKEKADQQVRFMTLIRT</sequence>
<gene>
    <name evidence="1" type="primary">folE</name>
    <name type="ordered locus">BCAN_A1090</name>
</gene>
<proteinExistence type="inferred from homology"/>